<organism>
    <name type="scientific">Mus musculus</name>
    <name type="common">Mouse</name>
    <dbReference type="NCBI Taxonomy" id="10090"/>
    <lineage>
        <taxon>Eukaryota</taxon>
        <taxon>Metazoa</taxon>
        <taxon>Chordata</taxon>
        <taxon>Craniata</taxon>
        <taxon>Vertebrata</taxon>
        <taxon>Euteleostomi</taxon>
        <taxon>Mammalia</taxon>
        <taxon>Eutheria</taxon>
        <taxon>Euarchontoglires</taxon>
        <taxon>Glires</taxon>
        <taxon>Rodentia</taxon>
        <taxon>Myomorpha</taxon>
        <taxon>Muroidea</taxon>
        <taxon>Muridae</taxon>
        <taxon>Murinae</taxon>
        <taxon>Mus</taxon>
        <taxon>Mus</taxon>
    </lineage>
</organism>
<accession>O35083</accession>
<accession>O35446</accession>
<evidence type="ECO:0000250" key="1">
    <source>
        <dbReference type="UniProtKB" id="Q99943"/>
    </source>
</evidence>
<evidence type="ECO:0000250" key="2">
    <source>
        <dbReference type="UniProtKB" id="Q9D517"/>
    </source>
</evidence>
<evidence type="ECO:0000255" key="3"/>
<evidence type="ECO:0000269" key="4">
    <source>
    </source>
</evidence>
<evidence type="ECO:0000305" key="5"/>
<protein>
    <recommendedName>
        <fullName>1-acyl-sn-glycerol-3-phosphate acyltransferase alpha</fullName>
        <ecNumber evidence="1">2.3.1.51</ecNumber>
    </recommendedName>
    <alternativeName>
        <fullName>1-acylglycerol-3-phosphate O-acyltransferase 1</fullName>
        <shortName>1-AGP acyltransferase 1</shortName>
        <shortName>1-AGPAT 1</shortName>
    </alternativeName>
    <alternativeName>
        <fullName evidence="1">Lysophosphatidic acid acyltransferase alpha</fullName>
        <shortName>LPAAT-alpha</shortName>
    </alternativeName>
</protein>
<feature type="signal peptide" evidence="3">
    <location>
        <begin position="1"/>
        <end position="28"/>
    </location>
</feature>
<feature type="chain" id="PRO_0000208191" description="1-acyl-sn-glycerol-3-phosphate acyltransferase alpha">
    <location>
        <begin position="29"/>
        <end position="285"/>
    </location>
</feature>
<feature type="topological domain" description="Lumenal" evidence="1">
    <location>
        <begin position="29"/>
        <end position="34"/>
    </location>
</feature>
<feature type="transmembrane region" description="Helical" evidence="3">
    <location>
        <begin position="35"/>
        <end position="55"/>
    </location>
</feature>
<feature type="topological domain" description="Cytoplasmic" evidence="1">
    <location>
        <begin position="56"/>
        <end position="124"/>
    </location>
</feature>
<feature type="transmembrane region" description="Helical" evidence="3">
    <location>
        <begin position="125"/>
        <end position="145"/>
    </location>
</feature>
<feature type="topological domain" description="Lumenal" evidence="1">
    <location>
        <begin position="146"/>
        <end position="189"/>
    </location>
</feature>
<feature type="short sequence motif" description="HXXXXD motif" evidence="2">
    <location>
        <begin position="101"/>
        <end position="106"/>
    </location>
</feature>
<feature type="short sequence motif" description="EGTR motif" evidence="1">
    <location>
        <begin position="175"/>
        <end position="178"/>
    </location>
</feature>
<feature type="sequence conflict" description="In Ref. 2; AAB82009." evidence="5" ref="2">
    <original>A</original>
    <variation>V</variation>
    <location>
        <position position="73"/>
    </location>
</feature>
<name>PLCA_MOUSE</name>
<gene>
    <name type="primary">Agpat1</name>
</gene>
<sequence length="285" mass="31709">MELWPGAWTALLLLLLLLLSTLWFCSSSAKYFFKMAFYNGWILFLAILAIPVCAVRGRNVENMKILRLLLLHAKYLYGIRVEVRGAHHFPPTQPYVVVSNHQSSLDLLGMMEVLPDRCVPIAKRELLWAGSAGLACWLAGIIFIDRKRTGDAISVMSEVAQTLLTQDVRVWVFPEGTRNHNGSMLPFKRGAFHLAVQAQVPIIPIVMSSYQDFYSKKERRFTSPGRCQVRVLPPVSTEGLTPDDVPALADSVRHSMLTIFREISTDGLGGGDCLKKPGGAGEARL</sequence>
<reference key="1">
    <citation type="journal article" date="1997" name="Biochem. Biophys. Res. Commun.">
        <title>cDNA cloning and expression of murine 1-acyl-sn-glycerol-3-phosphate acyltransferase.</title>
        <authorList>
            <person name="Kume K."/>
            <person name="Shimizu T."/>
        </authorList>
    </citation>
    <scope>NUCLEOTIDE SEQUENCE [MRNA]</scope>
    <source>
        <tissue>Embryo</tissue>
    </source>
</reference>
<reference key="2">
    <citation type="journal article" date="2003" name="Genome Res.">
        <title>Analysis of the gene-dense major histocompatibility complex class III region and its comparison to mouse.</title>
        <authorList>
            <person name="Xie T."/>
            <person name="Rowen L."/>
            <person name="Aguado B."/>
            <person name="Ahearn M.E."/>
            <person name="Madan A."/>
            <person name="Qin S."/>
            <person name="Campbell R.D."/>
            <person name="Hood L."/>
        </authorList>
    </citation>
    <scope>NUCLEOTIDE SEQUENCE [LARGE SCALE GENOMIC DNA]</scope>
    <source>
        <strain>129</strain>
    </source>
</reference>
<reference key="3">
    <citation type="journal article" date="2005" name="Biochem. J.">
        <title>Cloning and characterization of murine 1-acyl-sn-glycerol 3-phosphate acyltransferases and their regulation by PPARalpha in murine heart.</title>
        <authorList>
            <person name="Lu B."/>
            <person name="Jiang Y.J."/>
            <person name="Zhou Y."/>
            <person name="Xu F.Y."/>
            <person name="Hatch G.M."/>
            <person name="Choy P.C."/>
        </authorList>
    </citation>
    <scope>TISSUE SPECIFICITY</scope>
    <source>
        <strain>C57BL/6J</strain>
    </source>
</reference>
<reference key="4">
    <citation type="journal article" date="2010" name="Cell">
        <title>A tissue-specific atlas of mouse protein phosphorylation and expression.</title>
        <authorList>
            <person name="Huttlin E.L."/>
            <person name="Jedrychowski M.P."/>
            <person name="Elias J.E."/>
            <person name="Goswami T."/>
            <person name="Rad R."/>
            <person name="Beausoleil S.A."/>
            <person name="Villen J."/>
            <person name="Haas W."/>
            <person name="Sowa M.E."/>
            <person name="Gygi S.P."/>
        </authorList>
    </citation>
    <scope>IDENTIFICATION BY MASS SPECTROMETRY [LARGE SCALE ANALYSIS]</scope>
    <source>
        <tissue>Brain</tissue>
        <tissue>Brown adipose tissue</tissue>
        <tissue>Kidney</tissue>
        <tissue>Lung</tissue>
        <tissue>Testis</tissue>
    </source>
</reference>
<proteinExistence type="evidence at protein level"/>
<dbReference type="EC" id="2.3.1.51" evidence="1"/>
<dbReference type="EMBL" id="AB005623">
    <property type="protein sequence ID" value="BAA22599.1"/>
    <property type="molecule type" value="mRNA"/>
</dbReference>
<dbReference type="EMBL" id="AF030001">
    <property type="protein sequence ID" value="AAB82009.1"/>
    <property type="molecule type" value="Genomic_DNA"/>
</dbReference>
<dbReference type="CCDS" id="CCDS37590.1"/>
<dbReference type="PIR" id="JC5639">
    <property type="entry name" value="JC5639"/>
</dbReference>
<dbReference type="RefSeq" id="NP_001156851.1">
    <property type="nucleotide sequence ID" value="NM_001163379.1"/>
</dbReference>
<dbReference type="RefSeq" id="NP_061350.3">
    <property type="nucleotide sequence ID" value="NM_018862.3"/>
</dbReference>
<dbReference type="RefSeq" id="XP_006524710.1">
    <property type="nucleotide sequence ID" value="XM_006524647.2"/>
</dbReference>
<dbReference type="RefSeq" id="XP_006524711.1">
    <property type="nucleotide sequence ID" value="XM_006524648.1"/>
</dbReference>
<dbReference type="SMR" id="O35083"/>
<dbReference type="BioGRID" id="207751">
    <property type="interactions" value="7"/>
</dbReference>
<dbReference type="FunCoup" id="O35083">
    <property type="interactions" value="1159"/>
</dbReference>
<dbReference type="IntAct" id="O35083">
    <property type="interactions" value="1"/>
</dbReference>
<dbReference type="MINT" id="O35083"/>
<dbReference type="STRING" id="10090.ENSMUSP00000048573"/>
<dbReference type="ChEMBL" id="CHEMBL2844"/>
<dbReference type="GlyGen" id="O35083">
    <property type="glycosylation" value="2 sites, 1 N-linked glycan (1 site), 1 O-linked glycan (1 site)"/>
</dbReference>
<dbReference type="PhosphoSitePlus" id="O35083"/>
<dbReference type="SwissPalm" id="O35083"/>
<dbReference type="jPOST" id="O35083"/>
<dbReference type="PaxDb" id="10090-ENSMUSP00000048573"/>
<dbReference type="PeptideAtlas" id="O35083"/>
<dbReference type="ProteomicsDB" id="289917"/>
<dbReference type="Pumba" id="O35083"/>
<dbReference type="DNASU" id="55979"/>
<dbReference type="GeneID" id="55979"/>
<dbReference type="KEGG" id="mmu:55979"/>
<dbReference type="UCSC" id="uc008ccz.2">
    <property type="organism name" value="mouse"/>
</dbReference>
<dbReference type="AGR" id="MGI:1932075"/>
<dbReference type="CTD" id="10554"/>
<dbReference type="MGI" id="MGI:1932075">
    <property type="gene designation" value="Agpat1"/>
</dbReference>
<dbReference type="eggNOG" id="KOG2848">
    <property type="taxonomic scope" value="Eukaryota"/>
</dbReference>
<dbReference type="InParanoid" id="O35083"/>
<dbReference type="OrthoDB" id="202234at2759"/>
<dbReference type="PhylomeDB" id="O35083"/>
<dbReference type="TreeFam" id="TF314867"/>
<dbReference type="BRENDA" id="2.3.1.51">
    <property type="organism ID" value="3474"/>
</dbReference>
<dbReference type="Reactome" id="R-MMU-1483166">
    <property type="pathway name" value="Synthesis of PA"/>
</dbReference>
<dbReference type="UniPathway" id="UPA00557">
    <property type="reaction ID" value="UER00613"/>
</dbReference>
<dbReference type="BioGRID-ORCS" id="55979">
    <property type="hits" value="2 hits in 81 CRISPR screens"/>
</dbReference>
<dbReference type="ChiTaRS" id="Agpat1">
    <property type="organism name" value="mouse"/>
</dbReference>
<dbReference type="PRO" id="PR:O35083"/>
<dbReference type="Proteomes" id="UP000000589">
    <property type="component" value="Unplaced"/>
</dbReference>
<dbReference type="RNAct" id="O35083">
    <property type="molecule type" value="protein"/>
</dbReference>
<dbReference type="GO" id="GO:0005783">
    <property type="term" value="C:endoplasmic reticulum"/>
    <property type="evidence" value="ECO:0000250"/>
    <property type="project" value="UniProtKB"/>
</dbReference>
<dbReference type="GO" id="GO:0005789">
    <property type="term" value="C:endoplasmic reticulum membrane"/>
    <property type="evidence" value="ECO:0007669"/>
    <property type="project" value="UniProtKB-SubCell"/>
</dbReference>
<dbReference type="GO" id="GO:0003841">
    <property type="term" value="F:1-acylglycerol-3-phosphate O-acyltransferase activity"/>
    <property type="evidence" value="ECO:0000314"/>
    <property type="project" value="MGI"/>
</dbReference>
<dbReference type="GO" id="GO:0016024">
    <property type="term" value="P:CDP-diacylglycerol biosynthetic process"/>
    <property type="evidence" value="ECO:0007669"/>
    <property type="project" value="UniProtKB-UniPathway"/>
</dbReference>
<dbReference type="GO" id="GO:0006654">
    <property type="term" value="P:phosphatidic acid biosynthetic process"/>
    <property type="evidence" value="ECO:0000314"/>
    <property type="project" value="MGI"/>
</dbReference>
<dbReference type="CDD" id="cd07989">
    <property type="entry name" value="LPLAT_AGPAT-like"/>
    <property type="match status" value="1"/>
</dbReference>
<dbReference type="InterPro" id="IPR004552">
    <property type="entry name" value="AGP_acyltrans"/>
</dbReference>
<dbReference type="InterPro" id="IPR002123">
    <property type="entry name" value="Plipid/glycerol_acylTrfase"/>
</dbReference>
<dbReference type="NCBIfam" id="TIGR00530">
    <property type="entry name" value="AGP_acyltrn"/>
    <property type="match status" value="1"/>
</dbReference>
<dbReference type="PANTHER" id="PTHR10434">
    <property type="entry name" value="1-ACYL-SN-GLYCEROL-3-PHOSPHATE ACYLTRANSFERASE"/>
    <property type="match status" value="1"/>
</dbReference>
<dbReference type="PANTHER" id="PTHR10434:SF65">
    <property type="entry name" value="1-ACYL-SN-GLYCEROL-3-PHOSPHATE ACYLTRANSFERASE ALPHA"/>
    <property type="match status" value="1"/>
</dbReference>
<dbReference type="Pfam" id="PF01553">
    <property type="entry name" value="Acyltransferase"/>
    <property type="match status" value="1"/>
</dbReference>
<dbReference type="SMART" id="SM00563">
    <property type="entry name" value="PlsC"/>
    <property type="match status" value="1"/>
</dbReference>
<dbReference type="SUPFAM" id="SSF69593">
    <property type="entry name" value="Glycerol-3-phosphate (1)-acyltransferase"/>
    <property type="match status" value="1"/>
</dbReference>
<comment type="function">
    <text evidence="1">Converts 1-acyl-sn-glycerol-3-phosphate (lysophosphatidic acid or LPA) into 1,2-diacyl-sn-glycerol-3-phosphate (phosphatidic acid or PA) by incorporating an acyl moiety at the sn-2 position of the glycerol backbone.</text>
</comment>
<comment type="catalytic activity">
    <reaction evidence="1">
        <text>a 1-acyl-sn-glycero-3-phosphate + an acyl-CoA = a 1,2-diacyl-sn-glycero-3-phosphate + CoA</text>
        <dbReference type="Rhea" id="RHEA:19709"/>
        <dbReference type="ChEBI" id="CHEBI:57287"/>
        <dbReference type="ChEBI" id="CHEBI:57970"/>
        <dbReference type="ChEBI" id="CHEBI:58342"/>
        <dbReference type="ChEBI" id="CHEBI:58608"/>
        <dbReference type="EC" id="2.3.1.51"/>
    </reaction>
    <physiologicalReaction direction="left-to-right" evidence="1">
        <dbReference type="Rhea" id="RHEA:19710"/>
    </physiologicalReaction>
</comment>
<comment type="catalytic activity">
    <reaction evidence="1">
        <text>1-(9Z-octadecenoyl)-sn-glycero-3-phosphate + (9Z)-octadecenoyl-CoA = 1,2-di-(9Z-octadecenoyl)-sn-glycero-3-phosphate + CoA</text>
        <dbReference type="Rhea" id="RHEA:37131"/>
        <dbReference type="ChEBI" id="CHEBI:57287"/>
        <dbReference type="ChEBI" id="CHEBI:57387"/>
        <dbReference type="ChEBI" id="CHEBI:74544"/>
        <dbReference type="ChEBI" id="CHEBI:74546"/>
    </reaction>
    <physiologicalReaction direction="left-to-right" evidence="1">
        <dbReference type="Rhea" id="RHEA:37132"/>
    </physiologicalReaction>
</comment>
<comment type="catalytic activity">
    <reaction evidence="1">
        <text>1-(9Z-octadecenoyl)-sn-glycero-3-phosphate + hexadecanoyl-CoA = 1-(9Z)-octadecenoyl-2-hexadecanoyl-sn-glycero-3-phosphate + CoA</text>
        <dbReference type="Rhea" id="RHEA:37143"/>
        <dbReference type="ChEBI" id="CHEBI:57287"/>
        <dbReference type="ChEBI" id="CHEBI:57379"/>
        <dbReference type="ChEBI" id="CHEBI:74544"/>
        <dbReference type="ChEBI" id="CHEBI:74551"/>
    </reaction>
    <physiologicalReaction direction="left-to-right" evidence="1">
        <dbReference type="Rhea" id="RHEA:37144"/>
    </physiologicalReaction>
</comment>
<comment type="catalytic activity">
    <reaction evidence="1">
        <text>heptadecanoyl-CoA + 1-(9Z-octadecenoyl)-sn-glycero-3-phosphate = 1-(9Z)-octadecenoyl-2-heptadecanoyl-sn-glycero-3-phosphate + CoA</text>
        <dbReference type="Rhea" id="RHEA:37155"/>
        <dbReference type="ChEBI" id="CHEBI:57287"/>
        <dbReference type="ChEBI" id="CHEBI:74307"/>
        <dbReference type="ChEBI" id="CHEBI:74544"/>
        <dbReference type="ChEBI" id="CHEBI:74558"/>
    </reaction>
    <physiologicalReaction direction="left-to-right" evidence="1">
        <dbReference type="Rhea" id="RHEA:37156"/>
    </physiologicalReaction>
</comment>
<comment type="catalytic activity">
    <reaction evidence="1">
        <text>1-(9Z-octadecenoyl)-sn-glycero-3-phosphate + octadecanoyl-CoA = 1-(9Z-octadecenoyl)-2-octadecanoyl-sn-glycero-3-phosphate + CoA</text>
        <dbReference type="Rhea" id="RHEA:37147"/>
        <dbReference type="ChEBI" id="CHEBI:57287"/>
        <dbReference type="ChEBI" id="CHEBI:57394"/>
        <dbReference type="ChEBI" id="CHEBI:74544"/>
        <dbReference type="ChEBI" id="CHEBI:74552"/>
    </reaction>
    <physiologicalReaction direction="left-to-right" evidence="1">
        <dbReference type="Rhea" id="RHEA:37148"/>
    </physiologicalReaction>
</comment>
<comment type="catalytic activity">
    <reaction evidence="1">
        <text>1-(9Z-octadecenoyl)-sn-glycero-3-phosphate + (9Z,12Z)-octadecadienoyl-CoA = 1-(9Z)-octadecenoyl-2-(9Z,12Z)-octadecadienoyl-sn-glycero-3-phosphate + CoA</text>
        <dbReference type="Rhea" id="RHEA:37159"/>
        <dbReference type="ChEBI" id="CHEBI:57287"/>
        <dbReference type="ChEBI" id="CHEBI:57383"/>
        <dbReference type="ChEBI" id="CHEBI:74544"/>
        <dbReference type="ChEBI" id="CHEBI:74563"/>
    </reaction>
    <physiologicalReaction direction="left-to-right" evidence="1">
        <dbReference type="Rhea" id="RHEA:37160"/>
    </physiologicalReaction>
</comment>
<comment type="catalytic activity">
    <reaction evidence="1">
        <text>1-(9Z-octadecenoyl)-sn-glycero-3-phosphate + tetradecanoyl-CoA = 1-(9Z)-octadecenoyl-2-tetradecanoyl-sn-glycero-3-phosphate + CoA</text>
        <dbReference type="Rhea" id="RHEA:37171"/>
        <dbReference type="ChEBI" id="CHEBI:57287"/>
        <dbReference type="ChEBI" id="CHEBI:57385"/>
        <dbReference type="ChEBI" id="CHEBI:74544"/>
        <dbReference type="ChEBI" id="CHEBI:74579"/>
    </reaction>
    <physiologicalReaction direction="left-to-right" evidence="1">
        <dbReference type="Rhea" id="RHEA:37172"/>
    </physiologicalReaction>
</comment>
<comment type="catalytic activity">
    <reaction evidence="1">
        <text>pentadecanoyl-CoA + 1-(9Z-octadecenoyl)-sn-glycero-3-phosphate = 1-(9Z)-octadecenoyl-2-pentadecanoyl-sn-glycero-3-phosphate + CoA</text>
        <dbReference type="Rhea" id="RHEA:37175"/>
        <dbReference type="ChEBI" id="CHEBI:57287"/>
        <dbReference type="ChEBI" id="CHEBI:74309"/>
        <dbReference type="ChEBI" id="CHEBI:74544"/>
        <dbReference type="ChEBI" id="CHEBI:74578"/>
    </reaction>
    <physiologicalReaction direction="left-to-right" evidence="1">
        <dbReference type="Rhea" id="RHEA:37176"/>
    </physiologicalReaction>
</comment>
<comment type="catalytic activity">
    <reaction evidence="1">
        <text>1-hexadecanoyl-sn-glycero-3-phosphate + (9Z)-octadecenoyl-CoA = 1-hexadecanoyl-2-(9Z-octadecenoyl)-sn-glycero-3-phosphate + CoA</text>
        <dbReference type="Rhea" id="RHEA:33187"/>
        <dbReference type="ChEBI" id="CHEBI:57287"/>
        <dbReference type="ChEBI" id="CHEBI:57387"/>
        <dbReference type="ChEBI" id="CHEBI:57518"/>
        <dbReference type="ChEBI" id="CHEBI:64839"/>
    </reaction>
    <physiologicalReaction direction="left-to-right" evidence="1">
        <dbReference type="Rhea" id="RHEA:33188"/>
    </physiologicalReaction>
</comment>
<comment type="catalytic activity">
    <reaction evidence="1">
        <text>1-(9Z,12Z,15Z)-octadecatrienoyl-sn-glycero-3-phosphate + (9Z)-octadecenoyl-CoA = 1-(9Z,12Z,15Z)-octadecatrienoyl-2-(9Z)-octadecenoyl-sn-glycero-3-phosphate + CoA</text>
        <dbReference type="Rhea" id="RHEA:37139"/>
        <dbReference type="ChEBI" id="CHEBI:57287"/>
        <dbReference type="ChEBI" id="CHEBI:57387"/>
        <dbReference type="ChEBI" id="CHEBI:74549"/>
        <dbReference type="ChEBI" id="CHEBI:74550"/>
    </reaction>
    <physiologicalReaction direction="left-to-right" evidence="1">
        <dbReference type="Rhea" id="RHEA:37140"/>
    </physiologicalReaction>
</comment>
<comment type="catalytic activity">
    <reaction evidence="1">
        <text>1-(6Z,9Z,12Z-octadecatrienoyl)-sn-glycero-3-phosphate + (9Z)-octadecenoyl-CoA = (6Z,9Z,12Z)-octadecatrienoyl-2-(9Z)-octadecenoyl-sn-glycero-3-phosphate + CoA</text>
        <dbReference type="Rhea" id="RHEA:37179"/>
        <dbReference type="ChEBI" id="CHEBI:57287"/>
        <dbReference type="ChEBI" id="CHEBI:57387"/>
        <dbReference type="ChEBI" id="CHEBI:74581"/>
        <dbReference type="ChEBI" id="CHEBI:74582"/>
    </reaction>
    <physiologicalReaction direction="left-to-right" evidence="1">
        <dbReference type="Rhea" id="RHEA:37180"/>
    </physiologicalReaction>
</comment>
<comment type="catalytic activity">
    <reaction evidence="1">
        <text>1-eicosanoyl-sn-glycero-3-phosphate + (9Z)-octadecenoyl-CoA = 1-eicosanoyl-2-(9Z)-octadecenoyl-sn-glycero-3-phosphate + CoA</text>
        <dbReference type="Rhea" id="RHEA:37183"/>
        <dbReference type="ChEBI" id="CHEBI:57287"/>
        <dbReference type="ChEBI" id="CHEBI:57387"/>
        <dbReference type="ChEBI" id="CHEBI:74583"/>
        <dbReference type="ChEBI" id="CHEBI:74584"/>
    </reaction>
    <physiologicalReaction direction="left-to-right" evidence="1">
        <dbReference type="Rhea" id="RHEA:37184"/>
    </physiologicalReaction>
</comment>
<comment type="catalytic activity">
    <reaction evidence="1">
        <text>1-tetradecanoyl-sn-glycerol 3-phosphate + (9Z)-octadecenoyl-CoA = 1-tetradecanoyl-2-(9Z)-octadecenoyl-sn-glycero-3-phosphate + CoA</text>
        <dbReference type="Rhea" id="RHEA:37187"/>
        <dbReference type="ChEBI" id="CHEBI:57287"/>
        <dbReference type="ChEBI" id="CHEBI:57387"/>
        <dbReference type="ChEBI" id="CHEBI:72683"/>
        <dbReference type="ChEBI" id="CHEBI:74586"/>
    </reaction>
    <physiologicalReaction direction="left-to-right" evidence="1">
        <dbReference type="Rhea" id="RHEA:37188"/>
    </physiologicalReaction>
</comment>
<comment type="catalytic activity">
    <reaction evidence="1">
        <text>1-(9Z-octadecenoyl)-sn-glycero-3-phosphate + (5Z,8Z,11Z,14Z)-eicosatetraenoyl-CoA = 1-(9Z)-octadecenoyl-2-(5Z,8Z,11Z,14Z)-eicosatetraenoyl-sn-glycero-3-phosphate + CoA</text>
        <dbReference type="Rhea" id="RHEA:37443"/>
        <dbReference type="ChEBI" id="CHEBI:57287"/>
        <dbReference type="ChEBI" id="CHEBI:57368"/>
        <dbReference type="ChEBI" id="CHEBI:74544"/>
        <dbReference type="ChEBI" id="CHEBI:74928"/>
    </reaction>
    <physiologicalReaction direction="left-to-right" evidence="1">
        <dbReference type="Rhea" id="RHEA:37444"/>
    </physiologicalReaction>
</comment>
<comment type="catalytic activity">
    <reaction evidence="1">
        <text>1-(9Z-octadecenoyl)-sn-glycero-3-phosphate + dodecanoyl-CoA = 1-(9Z)-octadecenoyl-2-dodecanoyl-sn-glycero-3-phosphate + CoA</text>
        <dbReference type="Rhea" id="RHEA:37591"/>
        <dbReference type="ChEBI" id="CHEBI:57287"/>
        <dbReference type="ChEBI" id="CHEBI:57375"/>
        <dbReference type="ChEBI" id="CHEBI:74544"/>
        <dbReference type="ChEBI" id="CHEBI:75076"/>
    </reaction>
    <physiologicalReaction direction="left-to-right" evidence="1">
        <dbReference type="Rhea" id="RHEA:37592"/>
    </physiologicalReaction>
</comment>
<comment type="catalytic activity">
    <reaction evidence="1">
        <text>(6Z)-octadecenoyl-CoA + 1-(9Z-octadecenoyl)-sn-glycero-3-phosphate = 1-(9Z)-octadecenoyl-2-(6Z)-octadecenoyl-sn-glycero-3-phosphate + CoA</text>
        <dbReference type="Rhea" id="RHEA:37607"/>
        <dbReference type="ChEBI" id="CHEBI:57287"/>
        <dbReference type="ChEBI" id="CHEBI:74544"/>
        <dbReference type="ChEBI" id="CHEBI:75123"/>
        <dbReference type="ChEBI" id="CHEBI:75124"/>
    </reaction>
    <physiologicalReaction direction="left-to-right" evidence="1">
        <dbReference type="Rhea" id="RHEA:37608"/>
    </physiologicalReaction>
</comment>
<comment type="catalytic activity">
    <reaction evidence="1">
        <text>(11Z)-octadecenoyl-CoA + 1-(9Z-octadecenoyl)-sn-glycero-3-phosphate = 1-(9Z)-octadecenoyl-2-(11Z)-octadecenoyl-sn-glycero-3-phosphate + CoA</text>
        <dbReference type="Rhea" id="RHEA:37603"/>
        <dbReference type="ChEBI" id="CHEBI:57287"/>
        <dbReference type="ChEBI" id="CHEBI:74544"/>
        <dbReference type="ChEBI" id="CHEBI:75121"/>
        <dbReference type="ChEBI" id="CHEBI:75122"/>
    </reaction>
    <physiologicalReaction direction="left-to-right" evidence="1">
        <dbReference type="Rhea" id="RHEA:37604"/>
    </physiologicalReaction>
</comment>
<comment type="catalytic activity">
    <reaction evidence="1">
        <text>(9Z)-hexadecenoyl-CoA + 1-(9Z-octadecenoyl)-sn-glycero-3-phosphate = 1-(9Z-octadecenoyl)-2-(9Z-hexadecenoyl)-sn-glycero-3-phosphate + CoA</text>
        <dbReference type="Rhea" id="RHEA:40195"/>
        <dbReference type="ChEBI" id="CHEBI:57287"/>
        <dbReference type="ChEBI" id="CHEBI:61540"/>
        <dbReference type="ChEBI" id="CHEBI:74544"/>
        <dbReference type="ChEBI" id="CHEBI:74697"/>
    </reaction>
    <physiologicalReaction direction="left-to-right" evidence="1">
        <dbReference type="Rhea" id="RHEA:40196"/>
    </physiologicalReaction>
</comment>
<comment type="pathway">
    <text>Phospholipid metabolism; CDP-diacylglycerol biosynthesis; CDP-diacylglycerol from sn-glycerol 3-phosphate: step 2/3.</text>
</comment>
<comment type="subcellular location">
    <subcellularLocation>
        <location evidence="1">Endoplasmic reticulum membrane</location>
        <topology evidence="3">Multi-pass membrane protein</topology>
    </subcellularLocation>
</comment>
<comment type="tissue specificity">
    <text evidence="4">Widely expressed.</text>
</comment>
<comment type="domain">
    <text evidence="2">The HXXXXD motif is essential for acyltransferase activity and may constitute the binding site for the phosphate moiety of the glycerol-3-phosphate.</text>
</comment>
<comment type="similarity">
    <text evidence="5">Belongs to the 1-acyl-sn-glycerol-3-phosphate acyltransferase family.</text>
</comment>
<keyword id="KW-0012">Acyltransferase</keyword>
<keyword id="KW-0256">Endoplasmic reticulum</keyword>
<keyword id="KW-0444">Lipid biosynthesis</keyword>
<keyword id="KW-0443">Lipid metabolism</keyword>
<keyword id="KW-0472">Membrane</keyword>
<keyword id="KW-0594">Phospholipid biosynthesis</keyword>
<keyword id="KW-1208">Phospholipid metabolism</keyword>
<keyword id="KW-1185">Reference proteome</keyword>
<keyword id="KW-0732">Signal</keyword>
<keyword id="KW-0808">Transferase</keyword>
<keyword id="KW-0812">Transmembrane</keyword>
<keyword id="KW-1133">Transmembrane helix</keyword>